<proteinExistence type="inferred from homology"/>
<feature type="signal peptide" evidence="1">
    <location>
        <begin position="1"/>
        <end position="13"/>
    </location>
</feature>
<feature type="chain" id="PRO_0000270027" description="Chaperone SurA">
    <location>
        <begin position="14"/>
        <end position="426"/>
    </location>
</feature>
<feature type="domain" description="PpiC 1" evidence="1">
    <location>
        <begin position="164"/>
        <end position="265"/>
    </location>
</feature>
<feature type="domain" description="PpiC 2" evidence="1">
    <location>
        <begin position="274"/>
        <end position="373"/>
    </location>
</feature>
<comment type="function">
    <text evidence="1">Chaperone involved in the correct folding and assembly of outer membrane proteins. Recognizes specific patterns of aromatic residues and the orientation of their side chains, which are found more frequently in integral outer membrane proteins. May act in both early periplasmic and late outer membrane-associated steps of protein maturation.</text>
</comment>
<comment type="catalytic activity">
    <reaction evidence="1">
        <text>[protein]-peptidylproline (omega=180) = [protein]-peptidylproline (omega=0)</text>
        <dbReference type="Rhea" id="RHEA:16237"/>
        <dbReference type="Rhea" id="RHEA-COMP:10747"/>
        <dbReference type="Rhea" id="RHEA-COMP:10748"/>
        <dbReference type="ChEBI" id="CHEBI:83833"/>
        <dbReference type="ChEBI" id="CHEBI:83834"/>
        <dbReference type="EC" id="5.2.1.8"/>
    </reaction>
</comment>
<comment type="subcellular location">
    <subcellularLocation>
        <location evidence="1">Periplasm</location>
    </subcellularLocation>
    <text evidence="1">Is capable of associating with the outer membrane.</text>
</comment>
<comment type="domain">
    <text evidence="1">The PPIase activity resides only in the second parvulin domain. The N-terminal region and the C-terminal tail are necessary and sufficient for the chaperone activity of SurA. The PPIase activity is dispensable for SurA to function as a chaperone. The N-terminal region and the C-terminal tail are also required for porin recognition.</text>
</comment>
<protein>
    <recommendedName>
        <fullName evidence="1">Chaperone SurA</fullName>
    </recommendedName>
    <alternativeName>
        <fullName evidence="1">Peptidyl-prolyl cis-trans isomerase SurA</fullName>
        <shortName evidence="1">PPIase SurA</shortName>
        <ecNumber evidence="1">5.2.1.8</ecNumber>
    </alternativeName>
    <alternativeName>
        <fullName evidence="1">Rotamase SurA</fullName>
    </alternativeName>
</protein>
<evidence type="ECO:0000255" key="1">
    <source>
        <dbReference type="HAMAP-Rule" id="MF_01183"/>
    </source>
</evidence>
<sequence length="426" mass="47405">MLGALFLSTAASAAVQSIDKVVAIVDNDVVMQSQLDQRVHEVQQTIAKRGGGVPPTSVLEQQVLERLIVENLQLQIGERSGIRITDEELNQAIGTIAQRNSMSIEQFRAALAHDGLSYEDARDQVRREMIISRVRQRRVAERIQVSEQEVKNFLASDLGKMQLSEELHLANILIPTPESANSEAIQSAARQAMEVYQQLKQGADFAQLAIARSGSDNALEGGDMGWRKAAQLPPPFDRELSAMAVGDITQPARTPGGFIILKLLDKRGGGNQVRDEVHVRHILIKPSEIRSEEETKRLAQKLYDRIEAGEDFAELAKSYSEDPGSALNGGDLNWIDPNALVPEFREVMAKTPQGQLSKPFKSPYGWHVLEVLGRRATDSTSQAREQQAMTVLRNRKYDEELQTWLRQIRDEAYVEIKLPGAEQAAQ</sequence>
<dbReference type="EC" id="5.2.1.8" evidence="1"/>
<dbReference type="EMBL" id="CP000076">
    <property type="protein sequence ID" value="AAY94840.2"/>
    <property type="molecule type" value="Genomic_DNA"/>
</dbReference>
<dbReference type="SMR" id="Q4K4X7"/>
<dbReference type="STRING" id="220664.PFL_5647"/>
<dbReference type="KEGG" id="pfl:PFL_5647"/>
<dbReference type="PATRIC" id="fig|220664.5.peg.5759"/>
<dbReference type="eggNOG" id="COG0760">
    <property type="taxonomic scope" value="Bacteria"/>
</dbReference>
<dbReference type="HOGENOM" id="CLU_034646_11_0_6"/>
<dbReference type="Proteomes" id="UP000008540">
    <property type="component" value="Chromosome"/>
</dbReference>
<dbReference type="GO" id="GO:0030288">
    <property type="term" value="C:outer membrane-bounded periplasmic space"/>
    <property type="evidence" value="ECO:0007669"/>
    <property type="project" value="InterPro"/>
</dbReference>
<dbReference type="GO" id="GO:0042277">
    <property type="term" value="F:peptide binding"/>
    <property type="evidence" value="ECO:0007669"/>
    <property type="project" value="InterPro"/>
</dbReference>
<dbReference type="GO" id="GO:0003755">
    <property type="term" value="F:peptidyl-prolyl cis-trans isomerase activity"/>
    <property type="evidence" value="ECO:0007669"/>
    <property type="project" value="UniProtKB-UniRule"/>
</dbReference>
<dbReference type="GO" id="GO:0051082">
    <property type="term" value="F:unfolded protein binding"/>
    <property type="evidence" value="ECO:0007669"/>
    <property type="project" value="UniProtKB-UniRule"/>
</dbReference>
<dbReference type="GO" id="GO:0043165">
    <property type="term" value="P:Gram-negative-bacterium-type cell outer membrane assembly"/>
    <property type="evidence" value="ECO:0007669"/>
    <property type="project" value="InterPro"/>
</dbReference>
<dbReference type="GO" id="GO:0006457">
    <property type="term" value="P:protein folding"/>
    <property type="evidence" value="ECO:0007669"/>
    <property type="project" value="UniProtKB-UniRule"/>
</dbReference>
<dbReference type="GO" id="GO:0050821">
    <property type="term" value="P:protein stabilization"/>
    <property type="evidence" value="ECO:0007669"/>
    <property type="project" value="InterPro"/>
</dbReference>
<dbReference type="Gene3D" id="3.10.50.40">
    <property type="match status" value="2"/>
</dbReference>
<dbReference type="Gene3D" id="1.10.4030.10">
    <property type="entry name" value="Porin chaperone SurA, peptide-binding domain"/>
    <property type="match status" value="1"/>
</dbReference>
<dbReference type="HAMAP" id="MF_01183">
    <property type="entry name" value="Chaperone_SurA"/>
    <property type="match status" value="1"/>
</dbReference>
<dbReference type="InterPro" id="IPR050280">
    <property type="entry name" value="OMP_Chaperone_SurA"/>
</dbReference>
<dbReference type="InterPro" id="IPR046357">
    <property type="entry name" value="PPIase_dom_sf"/>
</dbReference>
<dbReference type="InterPro" id="IPR000297">
    <property type="entry name" value="PPIase_PpiC"/>
</dbReference>
<dbReference type="InterPro" id="IPR023034">
    <property type="entry name" value="PPIase_SurA"/>
</dbReference>
<dbReference type="InterPro" id="IPR015391">
    <property type="entry name" value="SurA_N"/>
</dbReference>
<dbReference type="InterPro" id="IPR027304">
    <property type="entry name" value="Trigger_fact/SurA_dom_sf"/>
</dbReference>
<dbReference type="NCBIfam" id="NF008038">
    <property type="entry name" value="PRK10770.1"/>
    <property type="match status" value="1"/>
</dbReference>
<dbReference type="PANTHER" id="PTHR47637">
    <property type="entry name" value="CHAPERONE SURA"/>
    <property type="match status" value="1"/>
</dbReference>
<dbReference type="PANTHER" id="PTHR47637:SF1">
    <property type="entry name" value="CHAPERONE SURA"/>
    <property type="match status" value="1"/>
</dbReference>
<dbReference type="Pfam" id="PF00639">
    <property type="entry name" value="Rotamase"/>
    <property type="match status" value="1"/>
</dbReference>
<dbReference type="Pfam" id="PF13616">
    <property type="entry name" value="Rotamase_3"/>
    <property type="match status" value="1"/>
</dbReference>
<dbReference type="Pfam" id="PF09312">
    <property type="entry name" value="SurA_N"/>
    <property type="match status" value="1"/>
</dbReference>
<dbReference type="SUPFAM" id="SSF54534">
    <property type="entry name" value="FKBP-like"/>
    <property type="match status" value="2"/>
</dbReference>
<dbReference type="SUPFAM" id="SSF109998">
    <property type="entry name" value="Triger factor/SurA peptide-binding domain-like"/>
    <property type="match status" value="1"/>
</dbReference>
<dbReference type="PROSITE" id="PS50198">
    <property type="entry name" value="PPIC_PPIASE_2"/>
    <property type="match status" value="2"/>
</dbReference>
<reference key="1">
    <citation type="journal article" date="2005" name="Nat. Biotechnol.">
        <title>Complete genome sequence of the plant commensal Pseudomonas fluorescens Pf-5.</title>
        <authorList>
            <person name="Paulsen I.T."/>
            <person name="Press C.M."/>
            <person name="Ravel J."/>
            <person name="Kobayashi D.Y."/>
            <person name="Myers G.S.A."/>
            <person name="Mavrodi D.V."/>
            <person name="DeBoy R.T."/>
            <person name="Seshadri R."/>
            <person name="Ren Q."/>
            <person name="Madupu R."/>
            <person name="Dodson R.J."/>
            <person name="Durkin A.S."/>
            <person name="Brinkac L.M."/>
            <person name="Daugherty S.C."/>
            <person name="Sullivan S.A."/>
            <person name="Rosovitz M.J."/>
            <person name="Gwinn M.L."/>
            <person name="Zhou L."/>
            <person name="Schneider D.J."/>
            <person name="Cartinhour S.W."/>
            <person name="Nelson W.C."/>
            <person name="Weidman J."/>
            <person name="Watkins K."/>
            <person name="Tran K."/>
            <person name="Khouri H."/>
            <person name="Pierson E.A."/>
            <person name="Pierson L.S. III"/>
            <person name="Thomashow L.S."/>
            <person name="Loper J.E."/>
        </authorList>
    </citation>
    <scope>NUCLEOTIDE SEQUENCE [LARGE SCALE GENOMIC DNA]</scope>
    <source>
        <strain>ATCC BAA-477 / NRRL B-23932 / Pf-5</strain>
    </source>
</reference>
<gene>
    <name evidence="1" type="primary">surA</name>
    <name type="ordered locus">PFL_5647</name>
</gene>
<organism>
    <name type="scientific">Pseudomonas fluorescens (strain ATCC BAA-477 / NRRL B-23932 / Pf-5)</name>
    <dbReference type="NCBI Taxonomy" id="220664"/>
    <lineage>
        <taxon>Bacteria</taxon>
        <taxon>Pseudomonadati</taxon>
        <taxon>Pseudomonadota</taxon>
        <taxon>Gammaproteobacteria</taxon>
        <taxon>Pseudomonadales</taxon>
        <taxon>Pseudomonadaceae</taxon>
        <taxon>Pseudomonas</taxon>
    </lineage>
</organism>
<keyword id="KW-0143">Chaperone</keyword>
<keyword id="KW-0413">Isomerase</keyword>
<keyword id="KW-0574">Periplasm</keyword>
<keyword id="KW-0677">Repeat</keyword>
<keyword id="KW-0697">Rotamase</keyword>
<keyword id="KW-0732">Signal</keyword>
<accession>Q4K4X7</accession>
<name>SURA_PSEF5</name>